<dbReference type="EC" id="3.1.-.-" evidence="1"/>
<dbReference type="EMBL" id="CP001175">
    <property type="protein sequence ID" value="ACK38635.1"/>
    <property type="molecule type" value="Genomic_DNA"/>
</dbReference>
<dbReference type="RefSeq" id="WP_012580844.1">
    <property type="nucleotide sequence ID" value="NC_011660.1"/>
</dbReference>
<dbReference type="SMR" id="B8DF43"/>
<dbReference type="KEGG" id="lmh:LMHCC_0275"/>
<dbReference type="HOGENOM" id="CLU_007838_0_0_9"/>
<dbReference type="GO" id="GO:0051539">
    <property type="term" value="F:4 iron, 4 sulfur cluster binding"/>
    <property type="evidence" value="ECO:0007669"/>
    <property type="project" value="UniProtKB-KW"/>
</dbReference>
<dbReference type="GO" id="GO:0008409">
    <property type="term" value="F:5'-3' exonuclease activity"/>
    <property type="evidence" value="ECO:0007669"/>
    <property type="project" value="UniProtKB-UniRule"/>
</dbReference>
<dbReference type="GO" id="GO:0005524">
    <property type="term" value="F:ATP binding"/>
    <property type="evidence" value="ECO:0007669"/>
    <property type="project" value="UniProtKB-UniRule"/>
</dbReference>
<dbReference type="GO" id="GO:0003690">
    <property type="term" value="F:double-stranded DNA binding"/>
    <property type="evidence" value="ECO:0007669"/>
    <property type="project" value="UniProtKB-UniRule"/>
</dbReference>
<dbReference type="GO" id="GO:0004386">
    <property type="term" value="F:helicase activity"/>
    <property type="evidence" value="ECO:0007669"/>
    <property type="project" value="UniProtKB-KW"/>
</dbReference>
<dbReference type="GO" id="GO:0046872">
    <property type="term" value="F:metal ion binding"/>
    <property type="evidence" value="ECO:0007669"/>
    <property type="project" value="UniProtKB-KW"/>
</dbReference>
<dbReference type="GO" id="GO:0000724">
    <property type="term" value="P:double-strand break repair via homologous recombination"/>
    <property type="evidence" value="ECO:0007669"/>
    <property type="project" value="UniProtKB-UniRule"/>
</dbReference>
<dbReference type="FunFam" id="3.40.50.300:FF:003141">
    <property type="entry name" value="ATP-dependent helicase/deoxyribonuclease subunit B"/>
    <property type="match status" value="1"/>
</dbReference>
<dbReference type="FunFam" id="3.40.50.300:FF:003159">
    <property type="entry name" value="ATP-dependent helicase/deoxyribonuclease subunit B"/>
    <property type="match status" value="1"/>
</dbReference>
<dbReference type="FunFam" id="3.90.320.10:FF:000006">
    <property type="entry name" value="ATP-dependent helicase/deoxyribonuclease subunit B"/>
    <property type="match status" value="1"/>
</dbReference>
<dbReference type="Gene3D" id="3.90.320.10">
    <property type="match status" value="1"/>
</dbReference>
<dbReference type="Gene3D" id="6.10.140.1030">
    <property type="match status" value="1"/>
</dbReference>
<dbReference type="Gene3D" id="3.40.50.300">
    <property type="entry name" value="P-loop containing nucleotide triphosphate hydrolases"/>
    <property type="match status" value="3"/>
</dbReference>
<dbReference type="HAMAP" id="MF_01452">
    <property type="entry name" value="AddB_type1"/>
    <property type="match status" value="1"/>
</dbReference>
<dbReference type="InterPro" id="IPR049035">
    <property type="entry name" value="ADDB_N"/>
</dbReference>
<dbReference type="InterPro" id="IPR014140">
    <property type="entry name" value="DNA_helicase_suAddB"/>
</dbReference>
<dbReference type="InterPro" id="IPR014017">
    <property type="entry name" value="DNA_helicase_UvrD-like_C"/>
</dbReference>
<dbReference type="InterPro" id="IPR027417">
    <property type="entry name" value="P-loop_NTPase"/>
</dbReference>
<dbReference type="InterPro" id="IPR011604">
    <property type="entry name" value="PDDEXK-like_dom_sf"/>
</dbReference>
<dbReference type="InterPro" id="IPR038726">
    <property type="entry name" value="PDDEXK_AddAB-type"/>
</dbReference>
<dbReference type="NCBIfam" id="TIGR02773">
    <property type="entry name" value="addB_Gpos"/>
    <property type="match status" value="1"/>
</dbReference>
<dbReference type="PANTHER" id="PTHR30591">
    <property type="entry name" value="RECBCD ENZYME SUBUNIT RECC"/>
    <property type="match status" value="1"/>
</dbReference>
<dbReference type="PANTHER" id="PTHR30591:SF1">
    <property type="entry name" value="RECBCD ENZYME SUBUNIT RECC"/>
    <property type="match status" value="1"/>
</dbReference>
<dbReference type="Pfam" id="PF21445">
    <property type="entry name" value="ADDB_N"/>
    <property type="match status" value="1"/>
</dbReference>
<dbReference type="Pfam" id="PF12705">
    <property type="entry name" value="PDDEXK_1"/>
    <property type="match status" value="1"/>
</dbReference>
<dbReference type="Pfam" id="PF13361">
    <property type="entry name" value="UvrD_C"/>
    <property type="match status" value="1"/>
</dbReference>
<dbReference type="SUPFAM" id="SSF52540">
    <property type="entry name" value="P-loop containing nucleoside triphosphate hydrolases"/>
    <property type="match status" value="1"/>
</dbReference>
<dbReference type="PROSITE" id="PS51198">
    <property type="entry name" value="UVRD_HELICASE_ATP_BIND"/>
    <property type="match status" value="1"/>
</dbReference>
<dbReference type="PROSITE" id="PS51217">
    <property type="entry name" value="UVRD_HELICASE_CTER"/>
    <property type="match status" value="1"/>
</dbReference>
<protein>
    <recommendedName>
        <fullName evidence="1">ATP-dependent helicase/deoxyribonuclease subunit B</fullName>
        <ecNumber evidence="1">3.1.-.-</ecNumber>
    </recommendedName>
    <alternativeName>
        <fullName evidence="1">ATP-dependent helicase/nuclease subunit AddB</fullName>
    </alternativeName>
</protein>
<organism>
    <name type="scientific">Listeria monocytogenes serotype 4a (strain HCC23)</name>
    <dbReference type="NCBI Taxonomy" id="552536"/>
    <lineage>
        <taxon>Bacteria</taxon>
        <taxon>Bacillati</taxon>
        <taxon>Bacillota</taxon>
        <taxon>Bacilli</taxon>
        <taxon>Bacillales</taxon>
        <taxon>Listeriaceae</taxon>
        <taxon>Listeria</taxon>
    </lineage>
</organism>
<name>ADDB_LISMH</name>
<keyword id="KW-0004">4Fe-4S</keyword>
<keyword id="KW-0067">ATP-binding</keyword>
<keyword id="KW-0227">DNA damage</keyword>
<keyword id="KW-0234">DNA repair</keyword>
<keyword id="KW-0238">DNA-binding</keyword>
<keyword id="KW-0269">Exonuclease</keyword>
<keyword id="KW-0347">Helicase</keyword>
<keyword id="KW-0378">Hydrolase</keyword>
<keyword id="KW-0408">Iron</keyword>
<keyword id="KW-0411">Iron-sulfur</keyword>
<keyword id="KW-0479">Metal-binding</keyword>
<keyword id="KW-0540">Nuclease</keyword>
<keyword id="KW-0547">Nucleotide-binding</keyword>
<sequence>MTLQIIAGRSGTGKTTHLMDEVGEKIKQNSKTYIFIVPDQMTFQMETSFLNKENLAGMLGTQIFSFSRLAWKILQETGGLSKTFLSQTGIEMVIRKAALDQKDKLKIFSRATSRKGFYSELANLFKEMKQEEVSIEDMVQSATNLSTSVNNKVHDISLIYQKYEELLADKFLENEDYLRLLAEKIADSDYLNRTEIVIDGFTSFSKQELTVIGELMRKCDKVTVSLTLNVPEIQHGLDEYSMFKASTEAYYALLELAKLNGTQVEENKFFLENKRAKTESLAFLANTWGHNKFMSFKNEPQNLKIHQANNRRAEIEGIAREIRQLVLNGYRYRDIAILTRNLGDYDVLCETVMEAYNIPTFIDKKRAMAKHPFIEFIRSSLDAILFNWKYEPIFQAVKTEFFFDITEKSSLNRRKADILENYVLENGIQNKWKWEKEGDWVYRKIRGLSTNVLPQTDEEIHMQSIINEMRSLIVNPLATLELNLRKAKTGMEFALALYHYLEQVNAVERLESWRQRAEEQGYLELAREHEQAWSSISALLDEFVEVLGEETLDLDSFTEIIGTGLDALEFSLLPPSLDQVVLSDMENAKLLDMKVIFAIGMNDGVMPLRQKDKGIFSDQDRDALRAEDSKLKPSAKNNIGEEDLLAYKIISLPSDKLFLSYPAADEEGKVLSESNYLRKIKGQFNELNESVYLTDPSLLSDAEQSSYIRSKQATLGLLTSQLQMYKRGYTLSSVWWDAYNSYFENEKESIMAKQVLSSLYYENKTKPLQETTAKNLFGETIHASVSRMEKFFSCEFQHYAQYGLKLEERGHFQLQAVDMGEIFHGAMEWISAELKRNNLDWGNLTEEECKQMAKLAMTFLAPKIQHEILLSSKRMEYIQYKLLQIITRATTVLNEQAKSSAFRPVGLEVDFGLKGDIPPLKIPLQSDSELLLQGRIDRIDMAEQDDRTFLRIIDYKSSSHDLALTEVYYGLALQMLTYLDIVVTNAQKMIGKTAEPAGVLYFHMHNQYVQAEKELSDEAIAKELQKSSKMKGLILSDPVAVSLMDTTLEKGKASTIIPAEIKQNGELSARSRTATRAEFDKMRQFVRHKYQEAGNKILDGAVSINPYKLKERTPCQFCSFRSFCGFDPSLTSNQYRHLANEKAETILTKMDMEGGTQ</sequence>
<comment type="function">
    <text evidence="1">The heterodimer acts as both an ATP-dependent DNA helicase and an ATP-dependent, dual-direction single-stranded exonuclease. Recognizes the chi site generating a DNA molecule suitable for the initiation of homologous recombination. The AddB subunit has 5' -&gt; 3' nuclease activity but not helicase activity.</text>
</comment>
<comment type="cofactor">
    <cofactor evidence="1">
        <name>Mg(2+)</name>
        <dbReference type="ChEBI" id="CHEBI:18420"/>
    </cofactor>
</comment>
<comment type="cofactor">
    <cofactor evidence="1">
        <name>[4Fe-4S] cluster</name>
        <dbReference type="ChEBI" id="CHEBI:49883"/>
    </cofactor>
    <text evidence="1">Binds 1 [4Fe-4S] cluster.</text>
</comment>
<comment type="subunit">
    <text evidence="1">Heterodimer of AddA and AddB.</text>
</comment>
<comment type="miscellaneous">
    <text evidence="1">Despite having conserved helicase domains, this subunit does not have helicase activity.</text>
</comment>
<comment type="similarity">
    <text evidence="1">Belongs to the helicase family. AddB/RexB type 1 subfamily.</text>
</comment>
<feature type="chain" id="PRO_0000379196" description="ATP-dependent helicase/deoxyribonuclease subunit B">
    <location>
        <begin position="1"/>
        <end position="1157"/>
    </location>
</feature>
<feature type="domain" description="UvrD-like helicase ATP-binding" evidence="1">
    <location>
        <begin position="1"/>
        <end position="278"/>
    </location>
</feature>
<feature type="domain" description="UvrD-like helicase C-terminal" evidence="1">
    <location>
        <begin position="272"/>
        <end position="590"/>
    </location>
</feature>
<feature type="binding site" evidence="1">
    <location>
        <begin position="8"/>
        <end position="15"/>
    </location>
    <ligand>
        <name>ATP</name>
        <dbReference type="ChEBI" id="CHEBI:30616"/>
    </ligand>
</feature>
<feature type="binding site" evidence="1">
    <location>
        <position position="794"/>
    </location>
    <ligand>
        <name>[4Fe-4S] cluster</name>
        <dbReference type="ChEBI" id="CHEBI:49883"/>
    </ligand>
</feature>
<feature type="binding site" evidence="1">
    <location>
        <position position="1115"/>
    </location>
    <ligand>
        <name>[4Fe-4S] cluster</name>
        <dbReference type="ChEBI" id="CHEBI:49883"/>
    </ligand>
</feature>
<feature type="binding site" evidence="1">
    <location>
        <position position="1118"/>
    </location>
    <ligand>
        <name>[4Fe-4S] cluster</name>
        <dbReference type="ChEBI" id="CHEBI:49883"/>
    </ligand>
</feature>
<feature type="binding site" evidence="1">
    <location>
        <position position="1124"/>
    </location>
    <ligand>
        <name>[4Fe-4S] cluster</name>
        <dbReference type="ChEBI" id="CHEBI:49883"/>
    </ligand>
</feature>
<reference key="1">
    <citation type="journal article" date="2011" name="J. Bacteriol.">
        <title>Genome sequence of lineage III Listeria monocytogenes strain HCC23.</title>
        <authorList>
            <person name="Steele C.L."/>
            <person name="Donaldson J.R."/>
            <person name="Paul D."/>
            <person name="Banes M.M."/>
            <person name="Arick T."/>
            <person name="Bridges S.M."/>
            <person name="Lawrence M.L."/>
        </authorList>
    </citation>
    <scope>NUCLEOTIDE SEQUENCE [LARGE SCALE GENOMIC DNA]</scope>
    <source>
        <strain>HCC23</strain>
    </source>
</reference>
<accession>B8DF43</accession>
<proteinExistence type="inferred from homology"/>
<gene>
    <name evidence="1" type="primary">addB</name>
    <name type="ordered locus">LMHCC_0275</name>
</gene>
<evidence type="ECO:0000255" key="1">
    <source>
        <dbReference type="HAMAP-Rule" id="MF_01452"/>
    </source>
</evidence>